<dbReference type="EC" id="2.7.11.5" evidence="1"/>
<dbReference type="EC" id="3.1.3.-" evidence="1"/>
<dbReference type="EMBL" id="CP000270">
    <property type="protein sequence ID" value="ABE28747.1"/>
    <property type="molecule type" value="Genomic_DNA"/>
</dbReference>
<dbReference type="RefSeq" id="WP_011486591.1">
    <property type="nucleotide sequence ID" value="NC_007951.1"/>
</dbReference>
<dbReference type="SMR" id="Q146J2"/>
<dbReference type="STRING" id="266265.Bxe_A4253"/>
<dbReference type="KEGG" id="bxb:DR64_1930"/>
<dbReference type="KEGG" id="bxe:Bxe_A4253"/>
<dbReference type="PATRIC" id="fig|266265.5.peg.218"/>
<dbReference type="eggNOG" id="COG4579">
    <property type="taxonomic scope" value="Bacteria"/>
</dbReference>
<dbReference type="OrthoDB" id="5287793at2"/>
<dbReference type="Proteomes" id="UP000001817">
    <property type="component" value="Chromosome 1"/>
</dbReference>
<dbReference type="GO" id="GO:0005737">
    <property type="term" value="C:cytoplasm"/>
    <property type="evidence" value="ECO:0007669"/>
    <property type="project" value="UniProtKB-SubCell"/>
</dbReference>
<dbReference type="GO" id="GO:0008772">
    <property type="term" value="F:[isocitrate dehydrogenase (NADP+)] kinase activity"/>
    <property type="evidence" value="ECO:0007669"/>
    <property type="project" value="UniProtKB-UniRule"/>
</dbReference>
<dbReference type="GO" id="GO:0016208">
    <property type="term" value="F:AMP binding"/>
    <property type="evidence" value="ECO:0007669"/>
    <property type="project" value="TreeGrafter"/>
</dbReference>
<dbReference type="GO" id="GO:0005524">
    <property type="term" value="F:ATP binding"/>
    <property type="evidence" value="ECO:0007669"/>
    <property type="project" value="UniProtKB-UniRule"/>
</dbReference>
<dbReference type="GO" id="GO:0004721">
    <property type="term" value="F:phosphoprotein phosphatase activity"/>
    <property type="evidence" value="ECO:0007669"/>
    <property type="project" value="UniProtKB-KW"/>
</dbReference>
<dbReference type="GO" id="GO:0004674">
    <property type="term" value="F:protein serine/threonine kinase activity"/>
    <property type="evidence" value="ECO:0007669"/>
    <property type="project" value="UniProtKB-KW"/>
</dbReference>
<dbReference type="GO" id="GO:0006006">
    <property type="term" value="P:glucose metabolic process"/>
    <property type="evidence" value="ECO:0007669"/>
    <property type="project" value="InterPro"/>
</dbReference>
<dbReference type="GO" id="GO:0006097">
    <property type="term" value="P:glyoxylate cycle"/>
    <property type="evidence" value="ECO:0007669"/>
    <property type="project" value="UniProtKB-UniRule"/>
</dbReference>
<dbReference type="GO" id="GO:0006099">
    <property type="term" value="P:tricarboxylic acid cycle"/>
    <property type="evidence" value="ECO:0007669"/>
    <property type="project" value="UniProtKB-UniRule"/>
</dbReference>
<dbReference type="HAMAP" id="MF_00747">
    <property type="entry name" value="AceK"/>
    <property type="match status" value="1"/>
</dbReference>
<dbReference type="InterPro" id="IPR046855">
    <property type="entry name" value="AceK_kinase"/>
</dbReference>
<dbReference type="InterPro" id="IPR046854">
    <property type="entry name" value="AceK_regulatory"/>
</dbReference>
<dbReference type="InterPro" id="IPR010452">
    <property type="entry name" value="Isocitrate_DH_AceK"/>
</dbReference>
<dbReference type="NCBIfam" id="NF002804">
    <property type="entry name" value="PRK02946.1"/>
    <property type="match status" value="1"/>
</dbReference>
<dbReference type="PANTHER" id="PTHR39559">
    <property type="match status" value="1"/>
</dbReference>
<dbReference type="PANTHER" id="PTHR39559:SF1">
    <property type="entry name" value="ISOCITRATE DEHYDROGENASE KINASE_PHOSPHATASE"/>
    <property type="match status" value="1"/>
</dbReference>
<dbReference type="Pfam" id="PF06315">
    <property type="entry name" value="AceK_kinase"/>
    <property type="match status" value="1"/>
</dbReference>
<dbReference type="Pfam" id="PF20423">
    <property type="entry name" value="AceK_regulatory"/>
    <property type="match status" value="1"/>
</dbReference>
<dbReference type="PIRSF" id="PIRSF000719">
    <property type="entry name" value="AceK"/>
    <property type="match status" value="1"/>
</dbReference>
<keyword id="KW-0067">ATP-binding</keyword>
<keyword id="KW-0963">Cytoplasm</keyword>
<keyword id="KW-0329">Glyoxylate bypass</keyword>
<keyword id="KW-0378">Hydrolase</keyword>
<keyword id="KW-0418">Kinase</keyword>
<keyword id="KW-0547">Nucleotide-binding</keyword>
<keyword id="KW-0904">Protein phosphatase</keyword>
<keyword id="KW-1185">Reference proteome</keyword>
<keyword id="KW-0723">Serine/threonine-protein kinase</keyword>
<keyword id="KW-0808">Transferase</keyword>
<keyword id="KW-0816">Tricarboxylic acid cycle</keyword>
<reference key="1">
    <citation type="journal article" date="2006" name="Proc. Natl. Acad. Sci. U.S.A.">
        <title>Burkholderia xenovorans LB400 harbors a multi-replicon, 9.73-Mbp genome shaped for versatility.</title>
        <authorList>
            <person name="Chain P.S.G."/>
            <person name="Denef V.J."/>
            <person name="Konstantinidis K.T."/>
            <person name="Vergez L.M."/>
            <person name="Agullo L."/>
            <person name="Reyes V.L."/>
            <person name="Hauser L."/>
            <person name="Cordova M."/>
            <person name="Gomez L."/>
            <person name="Gonzalez M."/>
            <person name="Land M."/>
            <person name="Lao V."/>
            <person name="Larimer F."/>
            <person name="LiPuma J.J."/>
            <person name="Mahenthiralingam E."/>
            <person name="Malfatti S.A."/>
            <person name="Marx C.J."/>
            <person name="Parnell J.J."/>
            <person name="Ramette A."/>
            <person name="Richardson P."/>
            <person name="Seeger M."/>
            <person name="Smith D."/>
            <person name="Spilker T."/>
            <person name="Sul W.J."/>
            <person name="Tsoi T.V."/>
            <person name="Ulrich L.E."/>
            <person name="Zhulin I.B."/>
            <person name="Tiedje J.M."/>
        </authorList>
    </citation>
    <scope>NUCLEOTIDE SEQUENCE [LARGE SCALE GENOMIC DNA]</scope>
    <source>
        <strain>LB400</strain>
    </source>
</reference>
<name>ACEK_PARXL</name>
<evidence type="ECO:0000255" key="1">
    <source>
        <dbReference type="HAMAP-Rule" id="MF_00747"/>
    </source>
</evidence>
<evidence type="ECO:0000256" key="2">
    <source>
        <dbReference type="SAM" id="MobiDB-lite"/>
    </source>
</evidence>
<accession>Q146J2</accession>
<comment type="function">
    <text evidence="1">Bifunctional enzyme which can phosphorylate or dephosphorylate isocitrate dehydrogenase (IDH) on a specific serine residue. This is a regulatory mechanism which enables bacteria to bypass the Krebs cycle via the glyoxylate shunt in response to the source of carbon. When bacteria are grown on glucose, IDH is fully active and unphosphorylated, but when grown on acetate or ethanol, the activity of IDH declines drastically concomitant with its phosphorylation.</text>
</comment>
<comment type="catalytic activity">
    <reaction evidence="1">
        <text>L-seryl-[isocitrate dehydrogenase] + ATP = O-phospho-L-seryl-[isocitrate dehydrogenase] + ADP + H(+)</text>
        <dbReference type="Rhea" id="RHEA:43540"/>
        <dbReference type="Rhea" id="RHEA-COMP:10605"/>
        <dbReference type="Rhea" id="RHEA-COMP:10606"/>
        <dbReference type="ChEBI" id="CHEBI:15378"/>
        <dbReference type="ChEBI" id="CHEBI:29999"/>
        <dbReference type="ChEBI" id="CHEBI:30616"/>
        <dbReference type="ChEBI" id="CHEBI:83421"/>
        <dbReference type="ChEBI" id="CHEBI:456216"/>
        <dbReference type="EC" id="2.7.11.5"/>
    </reaction>
</comment>
<comment type="subcellular location">
    <subcellularLocation>
        <location evidence="1">Cytoplasm</location>
    </subcellularLocation>
</comment>
<comment type="similarity">
    <text evidence="1">Belongs to the AceK family.</text>
</comment>
<protein>
    <recommendedName>
        <fullName evidence="1">Isocitrate dehydrogenase kinase/phosphatase</fullName>
        <shortName evidence="1">IDH kinase/phosphatase</shortName>
        <shortName evidence="1">IDHK/P</shortName>
        <ecNumber evidence="1">2.7.11.5</ecNumber>
        <ecNumber evidence="1">3.1.3.-</ecNumber>
    </recommendedName>
</protein>
<organism>
    <name type="scientific">Paraburkholderia xenovorans (strain LB400)</name>
    <dbReference type="NCBI Taxonomy" id="266265"/>
    <lineage>
        <taxon>Bacteria</taxon>
        <taxon>Pseudomonadati</taxon>
        <taxon>Pseudomonadota</taxon>
        <taxon>Betaproteobacteria</taxon>
        <taxon>Burkholderiales</taxon>
        <taxon>Burkholderiaceae</taxon>
        <taxon>Paraburkholderia</taxon>
    </lineage>
</organism>
<proteinExistence type="inferred from homology"/>
<feature type="chain" id="PRO_0000259149" description="Isocitrate dehydrogenase kinase/phosphatase">
    <location>
        <begin position="1"/>
        <end position="612"/>
    </location>
</feature>
<feature type="region of interest" description="Disordered" evidence="2">
    <location>
        <begin position="593"/>
        <end position="612"/>
    </location>
</feature>
<feature type="active site" evidence="1">
    <location>
        <position position="383"/>
    </location>
</feature>
<feature type="binding site" evidence="1">
    <location>
        <begin position="327"/>
        <end position="333"/>
    </location>
    <ligand>
        <name>ATP</name>
        <dbReference type="ChEBI" id="CHEBI:30616"/>
    </ligand>
</feature>
<feature type="binding site" evidence="1">
    <location>
        <position position="348"/>
    </location>
    <ligand>
        <name>ATP</name>
        <dbReference type="ChEBI" id="CHEBI:30616"/>
    </ligand>
</feature>
<sequence length="612" mass="70542">MNHFPKLLSSQIGFDVAQTMLEGFDRHYRIFRDAAIHAKTLFEQADWHGLQKLARDRITSYDERVEECVELLEDEYDAENIDDEVWQQIKLHYIGLLTTHRQPECAETFFNSVCCKILHRSYFSNDFIFVRPAISTEYIENDEPAAKPTYRAYYPGKDGLAATLERIVTNFQLEPPFEDLTRDVGCVMQAIQDAFGVFDEAPNFQIHVLSSLFYRNKSAYIIGRIINGDLLMPFAVPLRHVKPGVLALDTVLLKRDQLLIIFSFSHSYFLVDMEVPSAYVEFLGTIMQGKPKAEIYTSVGLQKQGKNLFYRDLLHHLSHSSDQFIIAPGIKGLVMLVFTLPSFPYVFKLIKDSFPPPKETTRAQIKEKYQLVKRHDRLGRMADTLEYSSVALPVSRLDEALVRELEKEVPSLIEYDGDSLVIRHMYIERRMVPLNLFLQNGNDEDIEHGIKEYGNAIKELMQANIFPGDMLYKNFGVTRHGRVVFYDYDEIEYLTDCNVRAVPAPRNEEDEMSGEPWYSVGPHDIFPETYGTFLLGDPRVRRSFMQHHADFFDPALWQRHKDHLLKGELADFFPYDGSVRFCMRYPERFADAAGAASNEQDAPDAGRSVRAA</sequence>
<gene>
    <name evidence="1" type="primary">aceK</name>
    <name type="ordered locus">Bxeno_A0209</name>
    <name type="ORF">Bxe_A4253</name>
</gene>